<accession>Q5ZK92</accession>
<accession>B5AH49</accession>
<accession>B5AH50</accession>
<accession>E1C6S3</accession>
<comment type="function">
    <text evidence="2">ATP-dependent microtubule severing protein that specifically recognizes and cuts microtubules that are polyglutamylated. Preferentially recognizes and acts on microtubules decorated with short polyglutamate tails: severing activity increases as the number of glutamates per tubulin rises from one to eight, but decreases beyond this glutamylation threshold. Microtubule severing promotes reorganization of cellular microtubule arrays and the release of microtubules from the centrosome following nucleation. Required for membrane traffic from the endoplasmic reticulum (ER) to the Golgi and for completion of the abscission stage of cytokinesis. Also plays a role in axon growth and the formation of axonal branches.</text>
</comment>
<comment type="catalytic activity">
    <reaction evidence="2">
        <text>n ATP + n H2O + a microtubule = n ADP + n phosphate + (n+1) alpha/beta tubulin heterodimers.</text>
        <dbReference type="EC" id="5.6.1.1"/>
    </reaction>
</comment>
<comment type="subunit">
    <text evidence="2">Homohexamer. The homohexamer is stabilized by ATP-binding. The homohexamer may adopt a ring conformation through which microtubules pass prior to being severed. Interacts with microtubules.</text>
</comment>
<comment type="subcellular location">
    <subcellularLocation>
        <location evidence="2">Membrane</location>
        <topology evidence="2">Peripheral membrane protein</topology>
    </subcellularLocation>
    <subcellularLocation>
        <location evidence="2">Cytoplasm</location>
        <location evidence="2">Cytoskeleton</location>
        <location evidence="2">Microtubule organizing center</location>
        <location evidence="2">Centrosome</location>
    </subcellularLocation>
    <subcellularLocation>
        <location evidence="2">Cytoplasm</location>
        <location evidence="2">Cytoskeleton</location>
    </subcellularLocation>
    <subcellularLocation>
        <location evidence="2">Cytoplasm</location>
        <location evidence="2">Perinuclear region</location>
    </subcellularLocation>
    <subcellularLocation>
        <location evidence="2">Nucleus</location>
    </subcellularLocation>
    <text evidence="2">Forms an intramembrane hairpin-like structure in the membrane.</text>
</comment>
<comment type="alternative products">
    <event type="alternative splicing"/>
    <isoform>
        <id>Q5ZK92-1</id>
        <name>1</name>
        <sequence type="displayed"/>
    </isoform>
    <isoform>
        <id>Q5ZK92-2</id>
        <name>2</name>
        <sequence type="described" ref="VSP_036648"/>
    </isoform>
</comment>
<comment type="similarity">
    <text evidence="2">Belongs to the AAA ATPase family. Spastin subfamily.</text>
</comment>
<name>SPAST_CHICK</name>
<feature type="chain" id="PRO_0000367136" description="Spastin">
    <location>
        <begin position="1"/>
        <end position="613"/>
    </location>
</feature>
<feature type="topological domain" description="Cytoplasmic" evidence="2">
    <location>
        <begin position="1"/>
        <end position="61"/>
    </location>
</feature>
<feature type="intramembrane region" description="Helical" evidence="2">
    <location>
        <begin position="62"/>
        <end position="82"/>
    </location>
</feature>
<feature type="topological domain" description="Cytoplasmic" evidence="2">
    <location>
        <begin position="83"/>
        <end position="613"/>
    </location>
</feature>
<feature type="domain" description="MIT" evidence="1">
    <location>
        <begin position="117"/>
        <end position="192"/>
    </location>
</feature>
<feature type="region of interest" description="Disordered" evidence="3">
    <location>
        <begin position="1"/>
        <end position="42"/>
    </location>
</feature>
<feature type="region of interest" description="Disordered" evidence="3">
    <location>
        <begin position="224"/>
        <end position="312"/>
    </location>
</feature>
<feature type="compositionally biased region" description="Low complexity" evidence="3">
    <location>
        <begin position="13"/>
        <end position="29"/>
    </location>
</feature>
<feature type="compositionally biased region" description="Pro residues" evidence="3">
    <location>
        <begin position="30"/>
        <end position="39"/>
    </location>
</feature>
<feature type="compositionally biased region" description="Polar residues" evidence="3">
    <location>
        <begin position="237"/>
        <end position="257"/>
    </location>
</feature>
<feature type="compositionally biased region" description="Polar residues" evidence="3">
    <location>
        <begin position="264"/>
        <end position="274"/>
    </location>
</feature>
<feature type="compositionally biased region" description="Polar residues" evidence="3">
    <location>
        <begin position="281"/>
        <end position="299"/>
    </location>
</feature>
<feature type="binding site" evidence="2">
    <location>
        <begin position="379"/>
        <end position="386"/>
    </location>
    <ligand>
        <name>ATP</name>
        <dbReference type="ChEBI" id="CHEBI:30616"/>
    </ligand>
</feature>
<feature type="splice variant" id="VSP_036648" description="In isoform 2." evidence="5">
    <location>
        <begin position="193"/>
        <end position="224"/>
    </location>
</feature>
<feature type="sequence conflict" description="In Ref. 1; ACF60960." evidence="6" ref="1">
    <original>A</original>
    <variation>T</variation>
    <location>
        <position position="45"/>
    </location>
</feature>
<feature type="sequence conflict" description="In Ref. 1; ACF60960/ACF60961." evidence="6" ref="1">
    <original>L</original>
    <variation>S</variation>
    <location>
        <position position="549"/>
    </location>
</feature>
<feature type="sequence conflict" description="In Ref. 1; ACF60960/ACF60961 and 2; CAG31851." ref="1 2">
    <original>A</original>
    <variation>V</variation>
    <location>
        <position position="550"/>
    </location>
</feature>
<evidence type="ECO:0000255" key="1"/>
<evidence type="ECO:0000255" key="2">
    <source>
        <dbReference type="HAMAP-Rule" id="MF_03021"/>
    </source>
</evidence>
<evidence type="ECO:0000256" key="3">
    <source>
        <dbReference type="SAM" id="MobiDB-lite"/>
    </source>
</evidence>
<evidence type="ECO:0000303" key="4">
    <source>
    </source>
</evidence>
<evidence type="ECO:0000303" key="5">
    <source ref="1"/>
</evidence>
<evidence type="ECO:0000305" key="6"/>
<gene>
    <name evidence="2" type="primary">SPAST</name>
    <name evidence="2" type="synonym">SPG4</name>
    <name evidence="4" type="ORF">RCJMB04_12e12</name>
</gene>
<reference key="1">
    <citation type="submission" date="2008-06" db="EMBL/GenBank/DDBJ databases">
        <title>Redundant microtubule severing proteins in neurons.</title>
        <authorList>
            <person name="Karabay A."/>
            <person name="Akbalik G."/>
        </authorList>
    </citation>
    <scope>NUCLEOTIDE SEQUENCE [MRNA] (ISOFORM 1)</scope>
    <scope>NUCLEOTIDE SEQUENCE [MRNA] OF 93-613 (ISOFORM 2)</scope>
</reference>
<reference key="2">
    <citation type="journal article" date="2005" name="Genome Biol.">
        <title>Full-length cDNAs from chicken bursal lymphocytes to facilitate gene function analysis.</title>
        <authorList>
            <person name="Caldwell R.B."/>
            <person name="Kierzek A.M."/>
            <person name="Arakawa H."/>
            <person name="Bezzubov Y."/>
            <person name="Zaim J."/>
            <person name="Fiedler P."/>
            <person name="Kutter S."/>
            <person name="Blagodatski A."/>
            <person name="Kostovska D."/>
            <person name="Koter M."/>
            <person name="Plachy J."/>
            <person name="Carninci P."/>
            <person name="Hayashizaki Y."/>
            <person name="Buerstedde J.-M."/>
        </authorList>
    </citation>
    <scope>NUCLEOTIDE SEQUENCE [LARGE SCALE MRNA] (ISOFORM 1)</scope>
    <source>
        <strain>CB</strain>
        <tissue>Bursa of Fabricius</tissue>
    </source>
</reference>
<reference key="3">
    <citation type="journal article" date="2004" name="Nature">
        <title>Sequence and comparative analysis of the chicken genome provide unique perspectives on vertebrate evolution.</title>
        <authorList>
            <person name="Hillier L.W."/>
            <person name="Miller W."/>
            <person name="Birney E."/>
            <person name="Warren W."/>
            <person name="Hardison R.C."/>
            <person name="Ponting C.P."/>
            <person name="Bork P."/>
            <person name="Burt D.W."/>
            <person name="Groenen M.A.M."/>
            <person name="Delany M.E."/>
            <person name="Dodgson J.B."/>
            <person name="Chinwalla A.T."/>
            <person name="Cliften P.F."/>
            <person name="Clifton S.W."/>
            <person name="Delehaunty K.D."/>
            <person name="Fronick C."/>
            <person name="Fulton R.S."/>
            <person name="Graves T.A."/>
            <person name="Kremitzki C."/>
            <person name="Layman D."/>
            <person name="Magrini V."/>
            <person name="McPherson J.D."/>
            <person name="Miner T.L."/>
            <person name="Minx P."/>
            <person name="Nash W.E."/>
            <person name="Nhan M.N."/>
            <person name="Nelson J.O."/>
            <person name="Oddy L.G."/>
            <person name="Pohl C.S."/>
            <person name="Randall-Maher J."/>
            <person name="Smith S.M."/>
            <person name="Wallis J.W."/>
            <person name="Yang S.-P."/>
            <person name="Romanov M.N."/>
            <person name="Rondelli C.M."/>
            <person name="Paton B."/>
            <person name="Smith J."/>
            <person name="Morrice D."/>
            <person name="Daniels L."/>
            <person name="Tempest H.G."/>
            <person name="Robertson L."/>
            <person name="Masabanda J.S."/>
            <person name="Griffin D.K."/>
            <person name="Vignal A."/>
            <person name="Fillon V."/>
            <person name="Jacobbson L."/>
            <person name="Kerje S."/>
            <person name="Andersson L."/>
            <person name="Crooijmans R.P."/>
            <person name="Aerts J."/>
            <person name="van der Poel J.J."/>
            <person name="Ellegren H."/>
            <person name="Caldwell R.B."/>
            <person name="Hubbard S.J."/>
            <person name="Grafham D.V."/>
            <person name="Kierzek A.M."/>
            <person name="McLaren S.R."/>
            <person name="Overton I.M."/>
            <person name="Arakawa H."/>
            <person name="Beattie K.J."/>
            <person name="Bezzubov Y."/>
            <person name="Boardman P.E."/>
            <person name="Bonfield J.K."/>
            <person name="Croning M.D.R."/>
            <person name="Davies R.M."/>
            <person name="Francis M.D."/>
            <person name="Humphray S.J."/>
            <person name="Scott C.E."/>
            <person name="Taylor R.G."/>
            <person name="Tickle C."/>
            <person name="Brown W.R.A."/>
            <person name="Rogers J."/>
            <person name="Buerstedde J.-M."/>
            <person name="Wilson S.A."/>
            <person name="Stubbs L."/>
            <person name="Ovcharenko I."/>
            <person name="Gordon L."/>
            <person name="Lucas S."/>
            <person name="Miller M.M."/>
            <person name="Inoko H."/>
            <person name="Shiina T."/>
            <person name="Kaufman J."/>
            <person name="Salomonsen J."/>
            <person name="Skjoedt K."/>
            <person name="Wong G.K.-S."/>
            <person name="Wang J."/>
            <person name="Liu B."/>
            <person name="Wang J."/>
            <person name="Yu J."/>
            <person name="Yang H."/>
            <person name="Nefedov M."/>
            <person name="Koriabine M."/>
            <person name="Dejong P.J."/>
            <person name="Goodstadt L."/>
            <person name="Webber C."/>
            <person name="Dickens N.J."/>
            <person name="Letunic I."/>
            <person name="Suyama M."/>
            <person name="Torrents D."/>
            <person name="von Mering C."/>
            <person name="Zdobnov E.M."/>
            <person name="Makova K."/>
            <person name="Nekrutenko A."/>
            <person name="Elnitski L."/>
            <person name="Eswara P."/>
            <person name="King D.C."/>
            <person name="Yang S.-P."/>
            <person name="Tyekucheva S."/>
            <person name="Radakrishnan A."/>
            <person name="Harris R.S."/>
            <person name="Chiaromonte F."/>
            <person name="Taylor J."/>
            <person name="He J."/>
            <person name="Rijnkels M."/>
            <person name="Griffiths-Jones S."/>
            <person name="Ureta-Vidal A."/>
            <person name="Hoffman M.M."/>
            <person name="Severin J."/>
            <person name="Searle S.M.J."/>
            <person name="Law A.S."/>
            <person name="Speed D."/>
            <person name="Waddington D."/>
            <person name="Cheng Z."/>
            <person name="Tuzun E."/>
            <person name="Eichler E."/>
            <person name="Bao Z."/>
            <person name="Flicek P."/>
            <person name="Shteynberg D.D."/>
            <person name="Brent M.R."/>
            <person name="Bye J.M."/>
            <person name="Huckle E.J."/>
            <person name="Chatterji S."/>
            <person name="Dewey C."/>
            <person name="Pachter L."/>
            <person name="Kouranov A."/>
            <person name="Mourelatos Z."/>
            <person name="Hatzigeorgiou A.G."/>
            <person name="Paterson A.H."/>
            <person name="Ivarie R."/>
            <person name="Brandstrom M."/>
            <person name="Axelsson E."/>
            <person name="Backstrom N."/>
            <person name="Berlin S."/>
            <person name="Webster M.T."/>
            <person name="Pourquie O."/>
            <person name="Reymond A."/>
            <person name="Ucla C."/>
            <person name="Antonarakis S.E."/>
            <person name="Long M."/>
            <person name="Emerson J.J."/>
            <person name="Betran E."/>
            <person name="Dupanloup I."/>
            <person name="Kaessmann H."/>
            <person name="Hinrichs A.S."/>
            <person name="Bejerano G."/>
            <person name="Furey T.S."/>
            <person name="Harte R.A."/>
            <person name="Raney B."/>
            <person name="Siepel A."/>
            <person name="Kent W.J."/>
            <person name="Haussler D."/>
            <person name="Eyras E."/>
            <person name="Castelo R."/>
            <person name="Abril J.F."/>
            <person name="Castellano S."/>
            <person name="Camara F."/>
            <person name="Parra G."/>
            <person name="Guigo R."/>
            <person name="Bourque G."/>
            <person name="Tesler G."/>
            <person name="Pevzner P.A."/>
            <person name="Smit A."/>
            <person name="Fulton L.A."/>
            <person name="Mardis E.R."/>
            <person name="Wilson R.K."/>
        </authorList>
    </citation>
    <scope>NUCLEOTIDE SEQUENCE [LARGE SCALE GENOMIC DNA]</scope>
    <source>
        <strain>Red jungle fowl</strain>
    </source>
</reference>
<organism>
    <name type="scientific">Gallus gallus</name>
    <name type="common">Chicken</name>
    <dbReference type="NCBI Taxonomy" id="9031"/>
    <lineage>
        <taxon>Eukaryota</taxon>
        <taxon>Metazoa</taxon>
        <taxon>Chordata</taxon>
        <taxon>Craniata</taxon>
        <taxon>Vertebrata</taxon>
        <taxon>Euteleostomi</taxon>
        <taxon>Archelosauria</taxon>
        <taxon>Archosauria</taxon>
        <taxon>Dinosauria</taxon>
        <taxon>Saurischia</taxon>
        <taxon>Theropoda</taxon>
        <taxon>Coelurosauria</taxon>
        <taxon>Aves</taxon>
        <taxon>Neognathae</taxon>
        <taxon>Galloanserae</taxon>
        <taxon>Galliformes</taxon>
        <taxon>Phasianidae</taxon>
        <taxon>Phasianinae</taxon>
        <taxon>Gallus</taxon>
    </lineage>
</organism>
<proteinExistence type="evidence at transcript level"/>
<protein>
    <recommendedName>
        <fullName evidence="2">Spastin</fullName>
        <ecNumber evidence="2">5.6.1.1</ecNumber>
    </recommendedName>
</protein>
<keyword id="KW-0025">Alternative splicing</keyword>
<keyword id="KW-0067">ATP-binding</keyword>
<keyword id="KW-0131">Cell cycle</keyword>
<keyword id="KW-0132">Cell division</keyword>
<keyword id="KW-0963">Cytoplasm</keyword>
<keyword id="KW-0206">Cytoskeleton</keyword>
<keyword id="KW-0217">Developmental protein</keyword>
<keyword id="KW-0221">Differentiation</keyword>
<keyword id="KW-0413">Isomerase</keyword>
<keyword id="KW-0472">Membrane</keyword>
<keyword id="KW-0493">Microtubule</keyword>
<keyword id="KW-0524">Neurogenesis</keyword>
<keyword id="KW-0547">Nucleotide-binding</keyword>
<keyword id="KW-0539">Nucleus</keyword>
<keyword id="KW-1185">Reference proteome</keyword>
<sequence length="613" mass="66238">MNSPGGRGKKKGSAGSSSAPPAAGASPSAPSGPAPPAPPAGAAAAAAASPHKRNLYYFSYPLFAAFALLRFVAFQLGLLVAWLCERLSRGALMAAKSSRAGDAPEPGGAAERVRACHKRAFECISMALRIDEDERAGQKEQAVEWYKKGIEELERGIAVLVVGQGDQCERARRLQSKMMTNLAMAKDRLQLLEKLQADLQISKPQMEVYNDSTNLACRNGHLQSESGAVPKKKDPLTHTSNSLPRSKTVAKTGSTGLSGHHRTPSYSGISTASVSRPAANPATSTHKAAPKNSRTNKPSTPTPAARKKKDTKVFRNVDSNLANLILNEIVDSGPAVKFDDIAGQELAKQALQEIVILPSLRPELFTGLRAPARGLLLFGPPGNGKTMLAKAVAAESNATFFNISAASLTSKYVGEGEKLVRALFAVARELQPSIIFIDEVDSLLCERREGEHDASRRLKTEFLIEFDGVQSSGEDRILVMGATNRPQELDDAVLRRFTKRVYVSLPNEETRLILLKNLLSKQGSPLTQKELAQLARMTDGYSGSDLTALAKDAALGPIRELKPEQVKNMSASEMRNIKLSDFTESLKKIKRSLSPQTLEAYIRWNKDFGDTTV</sequence>
<dbReference type="EC" id="5.6.1.1" evidence="2"/>
<dbReference type="EMBL" id="EU849599">
    <property type="protein sequence ID" value="ACF60960.1"/>
    <property type="molecule type" value="mRNA"/>
</dbReference>
<dbReference type="EMBL" id="EU849600">
    <property type="protein sequence ID" value="ACF60961.1"/>
    <property type="molecule type" value="mRNA"/>
</dbReference>
<dbReference type="EMBL" id="AJ720192">
    <property type="protein sequence ID" value="CAG31851.1"/>
    <property type="molecule type" value="mRNA"/>
</dbReference>
<dbReference type="EMBL" id="AADN03003400">
    <property type="status" value="NOT_ANNOTATED_CDS"/>
    <property type="molecule type" value="Genomic_DNA"/>
</dbReference>
<dbReference type="EMBL" id="AADN03003564">
    <property type="status" value="NOT_ANNOTATED_CDS"/>
    <property type="molecule type" value="Genomic_DNA"/>
</dbReference>
<dbReference type="RefSeq" id="NP_001026232.2">
    <molecule id="Q5ZK92-1"/>
    <property type="nucleotide sequence ID" value="NM_001031061.2"/>
</dbReference>
<dbReference type="RefSeq" id="XP_015139215.1">
    <molecule id="Q5ZK92-2"/>
    <property type="nucleotide sequence ID" value="XM_015283729.4"/>
</dbReference>
<dbReference type="RefSeq" id="XP_046769811.1">
    <molecule id="Q5ZK92-2"/>
    <property type="nucleotide sequence ID" value="XM_046913855.1"/>
</dbReference>
<dbReference type="SMR" id="Q5ZK92"/>
<dbReference type="FunCoup" id="Q5ZK92">
    <property type="interactions" value="2807"/>
</dbReference>
<dbReference type="STRING" id="9031.ENSGALP00000017259"/>
<dbReference type="GlyGen" id="Q5ZK92">
    <property type="glycosylation" value="1 site"/>
</dbReference>
<dbReference type="Ensembl" id="ENSGALT00010017319.1">
    <molecule id="Q5ZK92-1"/>
    <property type="protein sequence ID" value="ENSGALP00010009593.1"/>
    <property type="gene ID" value="ENSGALG00010007251.1"/>
</dbReference>
<dbReference type="Ensembl" id="ENSGALT00010017325.1">
    <molecule id="Q5ZK92-2"/>
    <property type="protein sequence ID" value="ENSGALP00010009596.1"/>
    <property type="gene ID" value="ENSGALG00010007251.1"/>
</dbReference>
<dbReference type="GeneID" id="421481"/>
<dbReference type="KEGG" id="gga:421481"/>
<dbReference type="CTD" id="6683"/>
<dbReference type="VEuPathDB" id="HostDB:geneid_421481"/>
<dbReference type="GeneTree" id="ENSGT00940000156258"/>
<dbReference type="InParanoid" id="Q5ZK92"/>
<dbReference type="OMA" id="KSREPML"/>
<dbReference type="OrthoDB" id="10251136at2759"/>
<dbReference type="Reactome" id="R-GGA-9668328">
    <property type="pathway name" value="Sealing of the nuclear envelope (NE) by ESCRT-III"/>
</dbReference>
<dbReference type="PRO" id="PR:Q5ZK92"/>
<dbReference type="Proteomes" id="UP000000539">
    <property type="component" value="Chromosome 3"/>
</dbReference>
<dbReference type="Bgee" id="ENSGALG00000010620">
    <property type="expression patterns" value="Expressed in spermatid and 13 other cell types or tissues"/>
</dbReference>
<dbReference type="GO" id="GO:1904115">
    <property type="term" value="C:axon cytoplasm"/>
    <property type="evidence" value="ECO:0007669"/>
    <property type="project" value="GOC"/>
</dbReference>
<dbReference type="GO" id="GO:0005813">
    <property type="term" value="C:centrosome"/>
    <property type="evidence" value="ECO:0007669"/>
    <property type="project" value="UniProtKB-SubCell"/>
</dbReference>
<dbReference type="GO" id="GO:0005829">
    <property type="term" value="C:cytosol"/>
    <property type="evidence" value="ECO:0007669"/>
    <property type="project" value="Ensembl"/>
</dbReference>
<dbReference type="GO" id="GO:0005783">
    <property type="term" value="C:endoplasmic reticulum"/>
    <property type="evidence" value="ECO:0007669"/>
    <property type="project" value="Ensembl"/>
</dbReference>
<dbReference type="GO" id="GO:0005768">
    <property type="term" value="C:endosome"/>
    <property type="evidence" value="ECO:0007669"/>
    <property type="project" value="Ensembl"/>
</dbReference>
<dbReference type="GO" id="GO:0005874">
    <property type="term" value="C:microtubule"/>
    <property type="evidence" value="ECO:0007669"/>
    <property type="project" value="UniProtKB-UniRule"/>
</dbReference>
<dbReference type="GO" id="GO:0015630">
    <property type="term" value="C:microtubule cytoskeleton"/>
    <property type="evidence" value="ECO:0000318"/>
    <property type="project" value="GO_Central"/>
</dbReference>
<dbReference type="GO" id="GO:0030496">
    <property type="term" value="C:midbody"/>
    <property type="evidence" value="ECO:0000250"/>
    <property type="project" value="UniProtKB"/>
</dbReference>
<dbReference type="GO" id="GO:0031965">
    <property type="term" value="C:nuclear membrane"/>
    <property type="evidence" value="ECO:0000250"/>
    <property type="project" value="UniProtKB"/>
</dbReference>
<dbReference type="GO" id="GO:0005654">
    <property type="term" value="C:nucleoplasm"/>
    <property type="evidence" value="ECO:0007669"/>
    <property type="project" value="Ensembl"/>
</dbReference>
<dbReference type="GO" id="GO:0005634">
    <property type="term" value="C:nucleus"/>
    <property type="evidence" value="ECO:0000250"/>
    <property type="project" value="UniProtKB"/>
</dbReference>
<dbReference type="GO" id="GO:0048471">
    <property type="term" value="C:perinuclear region of cytoplasm"/>
    <property type="evidence" value="ECO:0007669"/>
    <property type="project" value="UniProtKB-SubCell"/>
</dbReference>
<dbReference type="GO" id="GO:0000922">
    <property type="term" value="C:spindle pole"/>
    <property type="evidence" value="ECO:0007669"/>
    <property type="project" value="Ensembl"/>
</dbReference>
<dbReference type="GO" id="GO:0043014">
    <property type="term" value="F:alpha-tubulin binding"/>
    <property type="evidence" value="ECO:0000250"/>
    <property type="project" value="UniProtKB"/>
</dbReference>
<dbReference type="GO" id="GO:0005524">
    <property type="term" value="F:ATP binding"/>
    <property type="evidence" value="ECO:0007669"/>
    <property type="project" value="UniProtKB-UniRule"/>
</dbReference>
<dbReference type="GO" id="GO:0016887">
    <property type="term" value="F:ATP hydrolysis activity"/>
    <property type="evidence" value="ECO:0000318"/>
    <property type="project" value="GO_Central"/>
</dbReference>
<dbReference type="GO" id="GO:0048487">
    <property type="term" value="F:beta-tubulin binding"/>
    <property type="evidence" value="ECO:0000250"/>
    <property type="project" value="UniProtKB"/>
</dbReference>
<dbReference type="GO" id="GO:0008017">
    <property type="term" value="F:microtubule binding"/>
    <property type="evidence" value="ECO:0000250"/>
    <property type="project" value="UniProtKB"/>
</dbReference>
<dbReference type="GO" id="GO:0008568">
    <property type="term" value="F:microtubule severing ATPase activity"/>
    <property type="evidence" value="ECO:0000250"/>
    <property type="project" value="UniProtKB"/>
</dbReference>
<dbReference type="GO" id="GO:0008089">
    <property type="term" value="P:anterograde axonal transport"/>
    <property type="evidence" value="ECO:0000250"/>
    <property type="project" value="UniProtKB"/>
</dbReference>
<dbReference type="GO" id="GO:0019896">
    <property type="term" value="P:axonal transport of mitochondrion"/>
    <property type="evidence" value="ECO:0000250"/>
    <property type="project" value="UniProtKB"/>
</dbReference>
<dbReference type="GO" id="GO:0007409">
    <property type="term" value="P:axonogenesis"/>
    <property type="evidence" value="ECO:0007669"/>
    <property type="project" value="UniProtKB-UniRule"/>
</dbReference>
<dbReference type="GO" id="GO:0032506">
    <property type="term" value="P:cytokinetic process"/>
    <property type="evidence" value="ECO:0007669"/>
    <property type="project" value="UniProtKB-UniRule"/>
</dbReference>
<dbReference type="GO" id="GO:0006888">
    <property type="term" value="P:endoplasmic reticulum to Golgi vesicle-mediated transport"/>
    <property type="evidence" value="ECO:0007669"/>
    <property type="project" value="UniProtKB-UniRule"/>
</dbReference>
<dbReference type="GO" id="GO:0010458">
    <property type="term" value="P:exit from mitosis"/>
    <property type="evidence" value="ECO:0000250"/>
    <property type="project" value="UniProtKB"/>
</dbReference>
<dbReference type="GO" id="GO:0090148">
    <property type="term" value="P:membrane fission"/>
    <property type="evidence" value="ECO:0000250"/>
    <property type="project" value="UniProtKB"/>
</dbReference>
<dbReference type="GO" id="GO:0001578">
    <property type="term" value="P:microtubule bundle formation"/>
    <property type="evidence" value="ECO:0000250"/>
    <property type="project" value="UniProtKB"/>
</dbReference>
<dbReference type="GO" id="GO:0051013">
    <property type="term" value="P:microtubule severing"/>
    <property type="evidence" value="ECO:0000250"/>
    <property type="project" value="UniProtKB"/>
</dbReference>
<dbReference type="GO" id="GO:0000281">
    <property type="term" value="P:mitotic cytokinesis"/>
    <property type="evidence" value="ECO:0000250"/>
    <property type="project" value="UniProtKB"/>
</dbReference>
<dbReference type="GO" id="GO:0051228">
    <property type="term" value="P:mitotic spindle disassembly"/>
    <property type="evidence" value="ECO:0000250"/>
    <property type="project" value="UniProtKB"/>
</dbReference>
<dbReference type="GO" id="GO:0031468">
    <property type="term" value="P:nuclear membrane reassembly"/>
    <property type="evidence" value="ECO:0000250"/>
    <property type="project" value="UniProtKB"/>
</dbReference>
<dbReference type="GO" id="GO:0032467">
    <property type="term" value="P:positive regulation of cytokinesis"/>
    <property type="evidence" value="ECO:0007669"/>
    <property type="project" value="Ensembl"/>
</dbReference>
<dbReference type="GO" id="GO:0031117">
    <property type="term" value="P:positive regulation of microtubule depolymerization"/>
    <property type="evidence" value="ECO:0007669"/>
    <property type="project" value="UniProtKB-UniRule"/>
</dbReference>
<dbReference type="GO" id="GO:0034214">
    <property type="term" value="P:protein hexamerization"/>
    <property type="evidence" value="ECO:0000250"/>
    <property type="project" value="UniProtKB"/>
</dbReference>
<dbReference type="GO" id="GO:0051260">
    <property type="term" value="P:protein homooligomerization"/>
    <property type="evidence" value="ECO:0000250"/>
    <property type="project" value="UniProtKB"/>
</dbReference>
<dbReference type="CDD" id="cd02679">
    <property type="entry name" value="MIT_spastin"/>
    <property type="match status" value="1"/>
</dbReference>
<dbReference type="CDD" id="cd19524">
    <property type="entry name" value="RecA-like_spastin"/>
    <property type="match status" value="1"/>
</dbReference>
<dbReference type="FunFam" id="3.40.50.300:FF:000093">
    <property type="entry name" value="Fidgetin-like 1"/>
    <property type="match status" value="1"/>
</dbReference>
<dbReference type="FunFam" id="1.10.8.60:FF:000036">
    <property type="entry name" value="Spastin"/>
    <property type="match status" value="1"/>
</dbReference>
<dbReference type="FunFam" id="1.20.58.80:FF:000006">
    <property type="entry name" value="Spastin"/>
    <property type="match status" value="1"/>
</dbReference>
<dbReference type="Gene3D" id="1.10.8.60">
    <property type="match status" value="1"/>
</dbReference>
<dbReference type="Gene3D" id="3.40.50.300">
    <property type="entry name" value="P-loop containing nucleotide triphosphate hydrolases"/>
    <property type="match status" value="1"/>
</dbReference>
<dbReference type="Gene3D" id="1.20.58.80">
    <property type="entry name" value="Phosphotransferase system, lactose/cellobiose-type IIA subunit"/>
    <property type="match status" value="1"/>
</dbReference>
<dbReference type="HAMAP" id="MF_03021">
    <property type="entry name" value="Spastin"/>
    <property type="match status" value="1"/>
</dbReference>
<dbReference type="InterPro" id="IPR003593">
    <property type="entry name" value="AAA+_ATPase"/>
</dbReference>
<dbReference type="InterPro" id="IPR041569">
    <property type="entry name" value="AAA_lid_3"/>
</dbReference>
<dbReference type="InterPro" id="IPR003959">
    <property type="entry name" value="ATPase_AAA_core"/>
</dbReference>
<dbReference type="InterPro" id="IPR003960">
    <property type="entry name" value="ATPase_AAA_CS"/>
</dbReference>
<dbReference type="InterPro" id="IPR007330">
    <property type="entry name" value="MIT_dom"/>
</dbReference>
<dbReference type="InterPro" id="IPR050304">
    <property type="entry name" value="MT-severing_AAA_ATPase"/>
</dbReference>
<dbReference type="InterPro" id="IPR027417">
    <property type="entry name" value="P-loop_NTPase"/>
</dbReference>
<dbReference type="InterPro" id="IPR015415">
    <property type="entry name" value="Spast_Vps4_C"/>
</dbReference>
<dbReference type="InterPro" id="IPR017179">
    <property type="entry name" value="Spastin"/>
</dbReference>
<dbReference type="InterPro" id="IPR035106">
    <property type="entry name" value="Spastin_chordate"/>
</dbReference>
<dbReference type="PANTHER" id="PTHR23074">
    <property type="entry name" value="AAA DOMAIN-CONTAINING"/>
    <property type="match status" value="1"/>
</dbReference>
<dbReference type="PANTHER" id="PTHR23074:SF86">
    <property type="entry name" value="SPASTIN"/>
    <property type="match status" value="1"/>
</dbReference>
<dbReference type="Pfam" id="PF00004">
    <property type="entry name" value="AAA"/>
    <property type="match status" value="1"/>
</dbReference>
<dbReference type="Pfam" id="PF17862">
    <property type="entry name" value="AAA_lid_3"/>
    <property type="match status" value="1"/>
</dbReference>
<dbReference type="Pfam" id="PF09336">
    <property type="entry name" value="Vps4_C"/>
    <property type="match status" value="1"/>
</dbReference>
<dbReference type="PIRSF" id="PIRSF037338">
    <property type="entry name" value="Spastin"/>
    <property type="match status" value="1"/>
</dbReference>
<dbReference type="SMART" id="SM00382">
    <property type="entry name" value="AAA"/>
    <property type="match status" value="1"/>
</dbReference>
<dbReference type="SMART" id="SM00745">
    <property type="entry name" value="MIT"/>
    <property type="match status" value="1"/>
</dbReference>
<dbReference type="SUPFAM" id="SSF52540">
    <property type="entry name" value="P-loop containing nucleoside triphosphate hydrolases"/>
    <property type="match status" value="1"/>
</dbReference>
<dbReference type="PROSITE" id="PS00674">
    <property type="entry name" value="AAA"/>
    <property type="match status" value="1"/>
</dbReference>